<protein>
    <recommendedName>
        <fullName evidence="1">Lipoyl synthase</fullName>
        <ecNumber evidence="1">2.8.1.8</ecNumber>
    </recommendedName>
    <alternativeName>
        <fullName evidence="1">Lip-syn</fullName>
        <shortName evidence="1">LS</shortName>
    </alternativeName>
    <alternativeName>
        <fullName evidence="1">Lipoate synthase</fullName>
    </alternativeName>
    <alternativeName>
        <fullName evidence="1">Lipoic acid synthase</fullName>
    </alternativeName>
    <alternativeName>
        <fullName evidence="1">Sulfur insertion protein LipA</fullName>
    </alternativeName>
</protein>
<accession>O32962</accession>
<name>LIPA_MYCLE</name>
<dbReference type="EC" id="2.8.1.8" evidence="1"/>
<dbReference type="EMBL" id="Z98741">
    <property type="protein sequence ID" value="CAB11385.1"/>
    <property type="molecule type" value="Genomic_DNA"/>
</dbReference>
<dbReference type="EMBL" id="AL583920">
    <property type="protein sequence ID" value="CAC31239.1"/>
    <property type="molecule type" value="Genomic_DNA"/>
</dbReference>
<dbReference type="PIR" id="T44895">
    <property type="entry name" value="T44895"/>
</dbReference>
<dbReference type="RefSeq" id="NP_301646.1">
    <property type="nucleotide sequence ID" value="NC_002677.1"/>
</dbReference>
<dbReference type="RefSeq" id="WP_010907970.1">
    <property type="nucleotide sequence ID" value="NC_002677.1"/>
</dbReference>
<dbReference type="SMR" id="O32962"/>
<dbReference type="STRING" id="272631.gene:17574684"/>
<dbReference type="KEGG" id="mle:ML0858"/>
<dbReference type="PATRIC" id="fig|272631.5.peg.1584"/>
<dbReference type="Leproma" id="ML0858"/>
<dbReference type="eggNOG" id="COG0320">
    <property type="taxonomic scope" value="Bacteria"/>
</dbReference>
<dbReference type="HOGENOM" id="CLU_033144_2_1_11"/>
<dbReference type="OrthoDB" id="9787898at2"/>
<dbReference type="UniPathway" id="UPA00538">
    <property type="reaction ID" value="UER00593"/>
</dbReference>
<dbReference type="Proteomes" id="UP000000806">
    <property type="component" value="Chromosome"/>
</dbReference>
<dbReference type="GO" id="GO:0005737">
    <property type="term" value="C:cytoplasm"/>
    <property type="evidence" value="ECO:0007669"/>
    <property type="project" value="UniProtKB-SubCell"/>
</dbReference>
<dbReference type="GO" id="GO:0051539">
    <property type="term" value="F:4 iron, 4 sulfur cluster binding"/>
    <property type="evidence" value="ECO:0007669"/>
    <property type="project" value="UniProtKB-UniRule"/>
</dbReference>
<dbReference type="GO" id="GO:0016992">
    <property type="term" value="F:lipoate synthase activity"/>
    <property type="evidence" value="ECO:0007669"/>
    <property type="project" value="UniProtKB-UniRule"/>
</dbReference>
<dbReference type="GO" id="GO:0046872">
    <property type="term" value="F:metal ion binding"/>
    <property type="evidence" value="ECO:0007669"/>
    <property type="project" value="UniProtKB-KW"/>
</dbReference>
<dbReference type="CDD" id="cd01335">
    <property type="entry name" value="Radical_SAM"/>
    <property type="match status" value="1"/>
</dbReference>
<dbReference type="FunFam" id="3.20.20.70:FF:000116">
    <property type="entry name" value="Lipoyl synthase"/>
    <property type="match status" value="1"/>
</dbReference>
<dbReference type="Gene3D" id="3.20.20.70">
    <property type="entry name" value="Aldolase class I"/>
    <property type="match status" value="1"/>
</dbReference>
<dbReference type="HAMAP" id="MF_00206">
    <property type="entry name" value="Lipoyl_synth"/>
    <property type="match status" value="1"/>
</dbReference>
<dbReference type="InterPro" id="IPR013785">
    <property type="entry name" value="Aldolase_TIM"/>
</dbReference>
<dbReference type="InterPro" id="IPR006638">
    <property type="entry name" value="Elp3/MiaA/NifB-like_rSAM"/>
</dbReference>
<dbReference type="InterPro" id="IPR031691">
    <property type="entry name" value="LIAS_N"/>
</dbReference>
<dbReference type="InterPro" id="IPR003698">
    <property type="entry name" value="Lipoyl_synth"/>
</dbReference>
<dbReference type="InterPro" id="IPR007197">
    <property type="entry name" value="rSAM"/>
</dbReference>
<dbReference type="NCBIfam" id="TIGR00510">
    <property type="entry name" value="lipA"/>
    <property type="match status" value="1"/>
</dbReference>
<dbReference type="NCBIfam" id="NF004019">
    <property type="entry name" value="PRK05481.1"/>
    <property type="match status" value="1"/>
</dbReference>
<dbReference type="NCBIfam" id="NF009544">
    <property type="entry name" value="PRK12928.1"/>
    <property type="match status" value="1"/>
</dbReference>
<dbReference type="PANTHER" id="PTHR10949">
    <property type="entry name" value="LIPOYL SYNTHASE"/>
    <property type="match status" value="1"/>
</dbReference>
<dbReference type="PANTHER" id="PTHR10949:SF0">
    <property type="entry name" value="LIPOYL SYNTHASE, MITOCHONDRIAL"/>
    <property type="match status" value="1"/>
</dbReference>
<dbReference type="Pfam" id="PF16881">
    <property type="entry name" value="LIAS_N"/>
    <property type="match status" value="1"/>
</dbReference>
<dbReference type="Pfam" id="PF04055">
    <property type="entry name" value="Radical_SAM"/>
    <property type="match status" value="1"/>
</dbReference>
<dbReference type="PIRSF" id="PIRSF005963">
    <property type="entry name" value="Lipoyl_synth"/>
    <property type="match status" value="1"/>
</dbReference>
<dbReference type="SFLD" id="SFLDF00271">
    <property type="entry name" value="lipoyl_synthase"/>
    <property type="match status" value="1"/>
</dbReference>
<dbReference type="SFLD" id="SFLDG01058">
    <property type="entry name" value="lipoyl_synthase_like"/>
    <property type="match status" value="1"/>
</dbReference>
<dbReference type="SMART" id="SM00729">
    <property type="entry name" value="Elp3"/>
    <property type="match status" value="1"/>
</dbReference>
<dbReference type="SUPFAM" id="SSF102114">
    <property type="entry name" value="Radical SAM enzymes"/>
    <property type="match status" value="1"/>
</dbReference>
<dbReference type="PROSITE" id="PS51918">
    <property type="entry name" value="RADICAL_SAM"/>
    <property type="match status" value="1"/>
</dbReference>
<reference key="1">
    <citation type="journal article" date="2001" name="Nature">
        <title>Massive gene decay in the leprosy bacillus.</title>
        <authorList>
            <person name="Cole S.T."/>
            <person name="Eiglmeier K."/>
            <person name="Parkhill J."/>
            <person name="James K.D."/>
            <person name="Thomson N.R."/>
            <person name="Wheeler P.R."/>
            <person name="Honore N."/>
            <person name="Garnier T."/>
            <person name="Churcher C.M."/>
            <person name="Harris D.E."/>
            <person name="Mungall K.L."/>
            <person name="Basham D."/>
            <person name="Brown D."/>
            <person name="Chillingworth T."/>
            <person name="Connor R."/>
            <person name="Davies R.M."/>
            <person name="Devlin K."/>
            <person name="Duthoy S."/>
            <person name="Feltwell T."/>
            <person name="Fraser A."/>
            <person name="Hamlin N."/>
            <person name="Holroyd S."/>
            <person name="Hornsby T."/>
            <person name="Jagels K."/>
            <person name="Lacroix C."/>
            <person name="Maclean J."/>
            <person name="Moule S."/>
            <person name="Murphy L.D."/>
            <person name="Oliver K."/>
            <person name="Quail M.A."/>
            <person name="Rajandream M.A."/>
            <person name="Rutherford K.M."/>
            <person name="Rutter S."/>
            <person name="Seeger K."/>
            <person name="Simon S."/>
            <person name="Simmonds M."/>
            <person name="Skelton J."/>
            <person name="Squares R."/>
            <person name="Squares S."/>
            <person name="Stevens K."/>
            <person name="Taylor K."/>
            <person name="Whitehead S."/>
            <person name="Woodward J.R."/>
            <person name="Barrell B.G."/>
        </authorList>
    </citation>
    <scope>NUCLEOTIDE SEQUENCE [LARGE SCALE GENOMIC DNA]</scope>
    <source>
        <strain>TN</strain>
    </source>
</reference>
<evidence type="ECO:0000255" key="1">
    <source>
        <dbReference type="HAMAP-Rule" id="MF_00206"/>
    </source>
</evidence>
<evidence type="ECO:0000255" key="2">
    <source>
        <dbReference type="PROSITE-ProRule" id="PRU01266"/>
    </source>
</evidence>
<feature type="chain" id="PRO_0000102324" description="Lipoyl synthase">
    <location>
        <begin position="1"/>
        <end position="314"/>
    </location>
</feature>
<feature type="domain" description="Radical SAM core" evidence="2">
    <location>
        <begin position="67"/>
        <end position="281"/>
    </location>
</feature>
<feature type="binding site" evidence="1">
    <location>
        <position position="55"/>
    </location>
    <ligand>
        <name>[4Fe-4S] cluster</name>
        <dbReference type="ChEBI" id="CHEBI:49883"/>
        <label>1</label>
    </ligand>
</feature>
<feature type="binding site" evidence="1">
    <location>
        <position position="60"/>
    </location>
    <ligand>
        <name>[4Fe-4S] cluster</name>
        <dbReference type="ChEBI" id="CHEBI:49883"/>
        <label>1</label>
    </ligand>
</feature>
<feature type="binding site" evidence="1">
    <location>
        <position position="66"/>
    </location>
    <ligand>
        <name>[4Fe-4S] cluster</name>
        <dbReference type="ChEBI" id="CHEBI:49883"/>
        <label>1</label>
    </ligand>
</feature>
<feature type="binding site" evidence="1">
    <location>
        <position position="81"/>
    </location>
    <ligand>
        <name>[4Fe-4S] cluster</name>
        <dbReference type="ChEBI" id="CHEBI:49883"/>
        <label>2</label>
        <note>4Fe-4S-S-AdoMet</note>
    </ligand>
</feature>
<feature type="binding site" evidence="1">
    <location>
        <position position="85"/>
    </location>
    <ligand>
        <name>[4Fe-4S] cluster</name>
        <dbReference type="ChEBI" id="CHEBI:49883"/>
        <label>2</label>
        <note>4Fe-4S-S-AdoMet</note>
    </ligand>
</feature>
<feature type="binding site" evidence="1">
    <location>
        <position position="88"/>
    </location>
    <ligand>
        <name>[4Fe-4S] cluster</name>
        <dbReference type="ChEBI" id="CHEBI:49883"/>
        <label>2</label>
        <note>4Fe-4S-S-AdoMet</note>
    </ligand>
</feature>
<feature type="binding site" evidence="1">
    <location>
        <position position="292"/>
    </location>
    <ligand>
        <name>[4Fe-4S] cluster</name>
        <dbReference type="ChEBI" id="CHEBI:49883"/>
        <label>1</label>
    </ligand>
</feature>
<organism>
    <name type="scientific">Mycobacterium leprae (strain TN)</name>
    <dbReference type="NCBI Taxonomy" id="272631"/>
    <lineage>
        <taxon>Bacteria</taxon>
        <taxon>Bacillati</taxon>
        <taxon>Actinomycetota</taxon>
        <taxon>Actinomycetes</taxon>
        <taxon>Mycobacteriales</taxon>
        <taxon>Mycobacteriaceae</taxon>
        <taxon>Mycobacterium</taxon>
    </lineage>
</organism>
<sequence length="314" mass="35120">MTVAPEDCRLLRLEVRNAQTPIERKPPWIKTRARMGPEYTALKNLVRRVALHTVCEEAGCPNIFECWEDREATFLIGGDQCTRRCDFCQIDTGKPAALDRDEPRRVAESVQTMGLRYTTVTGVARDDLPDGGAWLYATTVRAIKELNPSTGVELLIPDFNGQPARLAEVFDSRPQVLAHNVETVPRIFKRIRPAFTYQRSLDVLTAAREAGLVTKSNLILGLGETADEVRTALADLRKTGCDIVTITQYLRPSMRHHPVERWVRPEEFVEYTQYAEGLGFSGVLGGPLVRSSYRAGRLYEQAAGTRTVGTSVSR</sequence>
<proteinExistence type="inferred from homology"/>
<gene>
    <name evidence="1" type="primary">lipA</name>
    <name type="ordered locus">ML0858</name>
    <name type="ORF">MLCB22.20</name>
</gene>
<keyword id="KW-0004">4Fe-4S</keyword>
<keyword id="KW-0963">Cytoplasm</keyword>
<keyword id="KW-0408">Iron</keyword>
<keyword id="KW-0411">Iron-sulfur</keyword>
<keyword id="KW-0479">Metal-binding</keyword>
<keyword id="KW-1185">Reference proteome</keyword>
<keyword id="KW-0949">S-adenosyl-L-methionine</keyword>
<keyword id="KW-0808">Transferase</keyword>
<comment type="function">
    <text evidence="1">Catalyzes the radical-mediated insertion of two sulfur atoms into the C-6 and C-8 positions of the octanoyl moiety bound to the lipoyl domains of lipoate-dependent enzymes, thereby converting the octanoylated domains into lipoylated derivatives.</text>
</comment>
<comment type="catalytic activity">
    <reaction evidence="1">
        <text>[[Fe-S] cluster scaffold protein carrying a second [4Fe-4S](2+) cluster] + N(6)-octanoyl-L-lysyl-[protein] + 2 oxidized [2Fe-2S]-[ferredoxin] + 2 S-adenosyl-L-methionine + 4 H(+) = [[Fe-S] cluster scaffold protein] + N(6)-[(R)-dihydrolipoyl]-L-lysyl-[protein] + 4 Fe(3+) + 2 hydrogen sulfide + 2 5'-deoxyadenosine + 2 L-methionine + 2 reduced [2Fe-2S]-[ferredoxin]</text>
        <dbReference type="Rhea" id="RHEA:16585"/>
        <dbReference type="Rhea" id="RHEA-COMP:9928"/>
        <dbReference type="Rhea" id="RHEA-COMP:10000"/>
        <dbReference type="Rhea" id="RHEA-COMP:10001"/>
        <dbReference type="Rhea" id="RHEA-COMP:10475"/>
        <dbReference type="Rhea" id="RHEA-COMP:14568"/>
        <dbReference type="Rhea" id="RHEA-COMP:14569"/>
        <dbReference type="ChEBI" id="CHEBI:15378"/>
        <dbReference type="ChEBI" id="CHEBI:17319"/>
        <dbReference type="ChEBI" id="CHEBI:29034"/>
        <dbReference type="ChEBI" id="CHEBI:29919"/>
        <dbReference type="ChEBI" id="CHEBI:33722"/>
        <dbReference type="ChEBI" id="CHEBI:33737"/>
        <dbReference type="ChEBI" id="CHEBI:33738"/>
        <dbReference type="ChEBI" id="CHEBI:57844"/>
        <dbReference type="ChEBI" id="CHEBI:59789"/>
        <dbReference type="ChEBI" id="CHEBI:78809"/>
        <dbReference type="ChEBI" id="CHEBI:83100"/>
        <dbReference type="EC" id="2.8.1.8"/>
    </reaction>
</comment>
<comment type="cofactor">
    <cofactor evidence="1">
        <name>[4Fe-4S] cluster</name>
        <dbReference type="ChEBI" id="CHEBI:49883"/>
    </cofactor>
    <text evidence="1">Binds 2 [4Fe-4S] clusters per subunit. One cluster is coordinated with 3 cysteines and an exchangeable S-adenosyl-L-methionine.</text>
</comment>
<comment type="pathway">
    <text evidence="1">Protein modification; protein lipoylation via endogenous pathway; protein N(6)-(lipoyl)lysine from octanoyl-[acyl-carrier-protein]: step 2/2.</text>
</comment>
<comment type="subcellular location">
    <subcellularLocation>
        <location evidence="1">Cytoplasm</location>
    </subcellularLocation>
</comment>
<comment type="similarity">
    <text evidence="1">Belongs to the radical SAM superfamily. Lipoyl synthase family.</text>
</comment>